<sequence length="74" mass="8328">MRADIHPKYEKLVATCSCGNVIETRSALGKETIYLDVCSACHPFYTGKQKNVDTGGRIDKFKQRFAGMSRSIKR</sequence>
<dbReference type="EMBL" id="CU468230">
    <property type="protein sequence ID" value="CAP00487.1"/>
    <property type="molecule type" value="Genomic_DNA"/>
</dbReference>
<dbReference type="SMR" id="B0VUE9"/>
<dbReference type="KEGG" id="abm:ABSDF1137"/>
<dbReference type="HOGENOM" id="CLU_114306_4_3_6"/>
<dbReference type="Proteomes" id="UP000001741">
    <property type="component" value="Chromosome"/>
</dbReference>
<dbReference type="GO" id="GO:1990904">
    <property type="term" value="C:ribonucleoprotein complex"/>
    <property type="evidence" value="ECO:0007669"/>
    <property type="project" value="UniProtKB-KW"/>
</dbReference>
<dbReference type="GO" id="GO:0005840">
    <property type="term" value="C:ribosome"/>
    <property type="evidence" value="ECO:0007669"/>
    <property type="project" value="UniProtKB-KW"/>
</dbReference>
<dbReference type="GO" id="GO:0046872">
    <property type="term" value="F:metal ion binding"/>
    <property type="evidence" value="ECO:0007669"/>
    <property type="project" value="UniProtKB-KW"/>
</dbReference>
<dbReference type="GO" id="GO:0019843">
    <property type="term" value="F:rRNA binding"/>
    <property type="evidence" value="ECO:0007669"/>
    <property type="project" value="UniProtKB-KW"/>
</dbReference>
<dbReference type="GO" id="GO:0003735">
    <property type="term" value="F:structural constituent of ribosome"/>
    <property type="evidence" value="ECO:0007669"/>
    <property type="project" value="InterPro"/>
</dbReference>
<dbReference type="GO" id="GO:0006412">
    <property type="term" value="P:translation"/>
    <property type="evidence" value="ECO:0007669"/>
    <property type="project" value="UniProtKB-UniRule"/>
</dbReference>
<dbReference type="Gene3D" id="4.10.830.30">
    <property type="entry name" value="Ribosomal protein L31"/>
    <property type="match status" value="1"/>
</dbReference>
<dbReference type="HAMAP" id="MF_00501">
    <property type="entry name" value="Ribosomal_bL31_1"/>
    <property type="match status" value="1"/>
</dbReference>
<dbReference type="InterPro" id="IPR034704">
    <property type="entry name" value="Ribosomal_bL28/bL31-like_sf"/>
</dbReference>
<dbReference type="InterPro" id="IPR002150">
    <property type="entry name" value="Ribosomal_bL31"/>
</dbReference>
<dbReference type="InterPro" id="IPR027491">
    <property type="entry name" value="Ribosomal_bL31_A"/>
</dbReference>
<dbReference type="InterPro" id="IPR042105">
    <property type="entry name" value="Ribosomal_bL31_sf"/>
</dbReference>
<dbReference type="NCBIfam" id="TIGR00105">
    <property type="entry name" value="L31"/>
    <property type="match status" value="1"/>
</dbReference>
<dbReference type="NCBIfam" id="NF000612">
    <property type="entry name" value="PRK00019.1"/>
    <property type="match status" value="1"/>
</dbReference>
<dbReference type="NCBIfam" id="NF001809">
    <property type="entry name" value="PRK00528.1"/>
    <property type="match status" value="1"/>
</dbReference>
<dbReference type="PANTHER" id="PTHR33280">
    <property type="entry name" value="50S RIBOSOMAL PROTEIN L31, CHLOROPLASTIC"/>
    <property type="match status" value="1"/>
</dbReference>
<dbReference type="PANTHER" id="PTHR33280:SF6">
    <property type="entry name" value="LARGE RIBOSOMAL SUBUNIT PROTEIN BL31A"/>
    <property type="match status" value="1"/>
</dbReference>
<dbReference type="Pfam" id="PF01197">
    <property type="entry name" value="Ribosomal_L31"/>
    <property type="match status" value="1"/>
</dbReference>
<dbReference type="PRINTS" id="PR01249">
    <property type="entry name" value="RIBOSOMALL31"/>
</dbReference>
<dbReference type="SUPFAM" id="SSF143800">
    <property type="entry name" value="L28p-like"/>
    <property type="match status" value="1"/>
</dbReference>
<dbReference type="PROSITE" id="PS01143">
    <property type="entry name" value="RIBOSOMAL_L31"/>
    <property type="match status" value="1"/>
</dbReference>
<gene>
    <name evidence="1" type="primary">rpmE</name>
    <name type="ordered locus">ABSDF1137</name>
</gene>
<reference key="1">
    <citation type="journal article" date="2008" name="PLoS ONE">
        <title>Comparative analysis of Acinetobacters: three genomes for three lifestyles.</title>
        <authorList>
            <person name="Vallenet D."/>
            <person name="Nordmann P."/>
            <person name="Barbe V."/>
            <person name="Poirel L."/>
            <person name="Mangenot S."/>
            <person name="Bataille E."/>
            <person name="Dossat C."/>
            <person name="Gas S."/>
            <person name="Kreimeyer A."/>
            <person name="Lenoble P."/>
            <person name="Oztas S."/>
            <person name="Poulain J."/>
            <person name="Segurens B."/>
            <person name="Robert C."/>
            <person name="Abergel C."/>
            <person name="Claverie J.-M."/>
            <person name="Raoult D."/>
            <person name="Medigue C."/>
            <person name="Weissenbach J."/>
            <person name="Cruveiller S."/>
        </authorList>
    </citation>
    <scope>NUCLEOTIDE SEQUENCE [LARGE SCALE GENOMIC DNA]</scope>
    <source>
        <strain>SDF</strain>
    </source>
</reference>
<organism>
    <name type="scientific">Acinetobacter baumannii (strain SDF)</name>
    <dbReference type="NCBI Taxonomy" id="509170"/>
    <lineage>
        <taxon>Bacteria</taxon>
        <taxon>Pseudomonadati</taxon>
        <taxon>Pseudomonadota</taxon>
        <taxon>Gammaproteobacteria</taxon>
        <taxon>Moraxellales</taxon>
        <taxon>Moraxellaceae</taxon>
        <taxon>Acinetobacter</taxon>
        <taxon>Acinetobacter calcoaceticus/baumannii complex</taxon>
    </lineage>
</organism>
<feature type="chain" id="PRO_1000126544" description="Large ribosomal subunit protein bL31">
    <location>
        <begin position="1"/>
        <end position="74"/>
    </location>
</feature>
<feature type="binding site" evidence="1">
    <location>
        <position position="16"/>
    </location>
    <ligand>
        <name>Zn(2+)</name>
        <dbReference type="ChEBI" id="CHEBI:29105"/>
    </ligand>
</feature>
<feature type="binding site" evidence="1">
    <location>
        <position position="18"/>
    </location>
    <ligand>
        <name>Zn(2+)</name>
        <dbReference type="ChEBI" id="CHEBI:29105"/>
    </ligand>
</feature>
<feature type="binding site" evidence="1">
    <location>
        <position position="38"/>
    </location>
    <ligand>
        <name>Zn(2+)</name>
        <dbReference type="ChEBI" id="CHEBI:29105"/>
    </ligand>
</feature>
<feature type="binding site" evidence="1">
    <location>
        <position position="41"/>
    </location>
    <ligand>
        <name>Zn(2+)</name>
        <dbReference type="ChEBI" id="CHEBI:29105"/>
    </ligand>
</feature>
<accession>B0VUE9</accession>
<proteinExistence type="inferred from homology"/>
<keyword id="KW-0479">Metal-binding</keyword>
<keyword id="KW-0687">Ribonucleoprotein</keyword>
<keyword id="KW-0689">Ribosomal protein</keyword>
<keyword id="KW-0694">RNA-binding</keyword>
<keyword id="KW-0699">rRNA-binding</keyword>
<keyword id="KW-0862">Zinc</keyword>
<protein>
    <recommendedName>
        <fullName evidence="1">Large ribosomal subunit protein bL31</fullName>
    </recommendedName>
    <alternativeName>
        <fullName evidence="2">50S ribosomal protein L31</fullName>
    </alternativeName>
</protein>
<name>RL31_ACIBS</name>
<evidence type="ECO:0000255" key="1">
    <source>
        <dbReference type="HAMAP-Rule" id="MF_00501"/>
    </source>
</evidence>
<evidence type="ECO:0000305" key="2"/>
<comment type="function">
    <text evidence="1">Binds the 23S rRNA.</text>
</comment>
<comment type="cofactor">
    <cofactor evidence="1">
        <name>Zn(2+)</name>
        <dbReference type="ChEBI" id="CHEBI:29105"/>
    </cofactor>
    <text evidence="1">Binds 1 zinc ion per subunit.</text>
</comment>
<comment type="subunit">
    <text evidence="1">Part of the 50S ribosomal subunit.</text>
</comment>
<comment type="similarity">
    <text evidence="1">Belongs to the bacterial ribosomal protein bL31 family. Type A subfamily.</text>
</comment>